<dbReference type="EMBL" id="AB183433">
    <property type="protein sequence ID" value="BAD91205.1"/>
    <property type="molecule type" value="mRNA"/>
</dbReference>
<dbReference type="EMBL" id="AK291296">
    <property type="protein sequence ID" value="BAF83985.1"/>
    <property type="molecule type" value="mRNA"/>
</dbReference>
<dbReference type="EMBL" id="CH471123">
    <property type="protein sequence ID" value="EAW55008.1"/>
    <property type="molecule type" value="Genomic_DNA"/>
</dbReference>
<dbReference type="EMBL" id="BC001753">
    <property type="protein sequence ID" value="AAH01753.2"/>
    <property type="molecule type" value="mRNA"/>
</dbReference>
<dbReference type="EMBL" id="BC033965">
    <property type="protein sequence ID" value="AAH33965.1"/>
    <property type="molecule type" value="mRNA"/>
</dbReference>
<dbReference type="CCDS" id="CCDS3979.1"/>
<dbReference type="RefSeq" id="NP_777549.1">
    <property type="nucleotide sequence ID" value="NM_174889.5"/>
</dbReference>
<dbReference type="SMR" id="Q8N183"/>
<dbReference type="BioGRID" id="124893">
    <property type="interactions" value="137"/>
</dbReference>
<dbReference type="FunCoup" id="Q8N183">
    <property type="interactions" value="1026"/>
</dbReference>
<dbReference type="IntAct" id="Q8N183">
    <property type="interactions" value="55"/>
</dbReference>
<dbReference type="MINT" id="Q8N183"/>
<dbReference type="STRING" id="9606.ENSP00000296597"/>
<dbReference type="BindingDB" id="Q8N183"/>
<dbReference type="ChEMBL" id="CHEMBL2363065"/>
<dbReference type="DrugCentral" id="Q8N183"/>
<dbReference type="GlyGen" id="Q8N183">
    <property type="glycosylation" value="2 sites, 1 O-linked glycan (2 sites)"/>
</dbReference>
<dbReference type="iPTMnet" id="Q8N183"/>
<dbReference type="MetOSite" id="Q8N183"/>
<dbReference type="PhosphoSitePlus" id="Q8N183"/>
<dbReference type="SwissPalm" id="Q8N183"/>
<dbReference type="BioMuta" id="NDUFAF2"/>
<dbReference type="DMDM" id="67461055"/>
<dbReference type="jPOST" id="Q8N183"/>
<dbReference type="MassIVE" id="Q8N183"/>
<dbReference type="PaxDb" id="9606-ENSP00000296597"/>
<dbReference type="PeptideAtlas" id="Q8N183"/>
<dbReference type="ProteomicsDB" id="71569"/>
<dbReference type="Pumba" id="Q8N183"/>
<dbReference type="TopDownProteomics" id="Q8N183"/>
<dbReference type="Antibodypedia" id="23660">
    <property type="antibodies" value="199 antibodies from 30 providers"/>
</dbReference>
<dbReference type="DNASU" id="91942"/>
<dbReference type="Ensembl" id="ENST00000296597.10">
    <property type="protein sequence ID" value="ENSP00000296597.5"/>
    <property type="gene ID" value="ENSG00000164182.12"/>
</dbReference>
<dbReference type="GeneID" id="91942"/>
<dbReference type="KEGG" id="hsa:91942"/>
<dbReference type="MANE-Select" id="ENST00000296597.10">
    <property type="protein sequence ID" value="ENSP00000296597.5"/>
    <property type="RefSeq nucleotide sequence ID" value="NM_174889.5"/>
    <property type="RefSeq protein sequence ID" value="NP_777549.1"/>
</dbReference>
<dbReference type="UCSC" id="uc003jsp.4">
    <property type="organism name" value="human"/>
</dbReference>
<dbReference type="AGR" id="HGNC:28086"/>
<dbReference type="CTD" id="91942"/>
<dbReference type="DisGeNET" id="91942"/>
<dbReference type="GeneCards" id="NDUFAF2"/>
<dbReference type="GeneReviews" id="NDUFAF2"/>
<dbReference type="HGNC" id="HGNC:28086">
    <property type="gene designation" value="NDUFAF2"/>
</dbReference>
<dbReference type="HPA" id="ENSG00000164182">
    <property type="expression patterns" value="Low tissue specificity"/>
</dbReference>
<dbReference type="MalaCards" id="NDUFAF2"/>
<dbReference type="MIM" id="609653">
    <property type="type" value="gene"/>
</dbReference>
<dbReference type="MIM" id="618233">
    <property type="type" value="phenotype"/>
</dbReference>
<dbReference type="neXtProt" id="NX_Q8N183"/>
<dbReference type="OpenTargets" id="ENSG00000164182"/>
<dbReference type="Orphanet" id="2609">
    <property type="disease" value="Isolated complex I deficiency"/>
</dbReference>
<dbReference type="PharmGKB" id="PA162397398"/>
<dbReference type="VEuPathDB" id="HostDB:ENSG00000164182"/>
<dbReference type="eggNOG" id="ENOG502S21I">
    <property type="taxonomic scope" value="Eukaryota"/>
</dbReference>
<dbReference type="GeneTree" id="ENSGT00390000002743"/>
<dbReference type="HOGENOM" id="CLU_138027_0_0_1"/>
<dbReference type="InParanoid" id="Q8N183"/>
<dbReference type="OMA" id="HKTWAGQ"/>
<dbReference type="OrthoDB" id="10255576at2759"/>
<dbReference type="PAN-GO" id="Q8N183">
    <property type="GO annotations" value="0 GO annotations based on evolutionary models"/>
</dbReference>
<dbReference type="PhylomeDB" id="Q8N183"/>
<dbReference type="TreeFam" id="TF314761"/>
<dbReference type="PathwayCommons" id="Q8N183"/>
<dbReference type="Reactome" id="R-HSA-6799198">
    <property type="pathway name" value="Complex I biogenesis"/>
</dbReference>
<dbReference type="SignaLink" id="Q8N183"/>
<dbReference type="SIGNOR" id="Q8N183"/>
<dbReference type="BioGRID-ORCS" id="91942">
    <property type="hits" value="60 hits in 1137 CRISPR screens"/>
</dbReference>
<dbReference type="ChiTaRS" id="NDUFAF2">
    <property type="organism name" value="human"/>
</dbReference>
<dbReference type="GenomeRNAi" id="91942"/>
<dbReference type="Pharos" id="Q8N183">
    <property type="development level" value="Tclin"/>
</dbReference>
<dbReference type="PRO" id="PR:Q8N183"/>
<dbReference type="Proteomes" id="UP000005640">
    <property type="component" value="Chromosome 5"/>
</dbReference>
<dbReference type="RNAct" id="Q8N183">
    <property type="molecule type" value="protein"/>
</dbReference>
<dbReference type="Bgee" id="ENSG00000164182">
    <property type="expression patterns" value="Expressed in calcaneal tendon and 98 other cell types or tissues"/>
</dbReference>
<dbReference type="ExpressionAtlas" id="Q8N183">
    <property type="expression patterns" value="baseline and differential"/>
</dbReference>
<dbReference type="GO" id="GO:0005743">
    <property type="term" value="C:mitochondrial inner membrane"/>
    <property type="evidence" value="ECO:0000304"/>
    <property type="project" value="Reactome"/>
</dbReference>
<dbReference type="GO" id="GO:0005739">
    <property type="term" value="C:mitochondrion"/>
    <property type="evidence" value="ECO:0000314"/>
    <property type="project" value="FlyBase"/>
</dbReference>
<dbReference type="GO" id="GO:0045271">
    <property type="term" value="C:respiratory chain complex I"/>
    <property type="evidence" value="ECO:0007669"/>
    <property type="project" value="InterPro"/>
</dbReference>
<dbReference type="GO" id="GO:0044877">
    <property type="term" value="F:protein-containing complex binding"/>
    <property type="evidence" value="ECO:0000314"/>
    <property type="project" value="FlyBase"/>
</dbReference>
<dbReference type="GO" id="GO:0060271">
    <property type="term" value="P:cilium assembly"/>
    <property type="evidence" value="ECO:0000315"/>
    <property type="project" value="UniProtKB"/>
</dbReference>
<dbReference type="GO" id="GO:0032981">
    <property type="term" value="P:mitochondrial respiratory chain complex I assembly"/>
    <property type="evidence" value="ECO:0000315"/>
    <property type="project" value="FlyBase"/>
</dbReference>
<dbReference type="GO" id="GO:0061179">
    <property type="term" value="P:negative regulation of insulin secretion involved in cellular response to glucose stimulus"/>
    <property type="evidence" value="ECO:0007669"/>
    <property type="project" value="Ensembl"/>
</dbReference>
<dbReference type="InterPro" id="IPR052618">
    <property type="entry name" value="ComplexI_NDUFA12"/>
</dbReference>
<dbReference type="InterPro" id="IPR007763">
    <property type="entry name" value="NDUFA12"/>
</dbReference>
<dbReference type="PANTHER" id="PTHR32470">
    <property type="entry name" value="ADH DEHYDROGENASE [UBIQUINONE] 1 ALPHA SUBCOMPLEX ASSEMBLY FACTOR 2"/>
    <property type="match status" value="1"/>
</dbReference>
<dbReference type="PANTHER" id="PTHR32470:SF2">
    <property type="entry name" value="NADH DEHYDROGENASE [UBIQUINONE] 1 ALPHA SUBCOMPLEX ASSEMBLY FACTOR 2"/>
    <property type="match status" value="1"/>
</dbReference>
<dbReference type="Pfam" id="PF05071">
    <property type="entry name" value="NDUFA12"/>
    <property type="match status" value="1"/>
</dbReference>
<reference key="1">
    <citation type="journal article" date="2005" name="J. Biol. Chem.">
        <title>A novel Myc-target gene, mimitin, that is involved in cell proliferation of esophageal squamous cell carcinoma.</title>
        <authorList>
            <person name="Tsuneoka M."/>
            <person name="Teye K."/>
            <person name="Arima N."/>
            <person name="Soejima M."/>
            <person name="Otera H."/>
            <person name="Ohashi K."/>
            <person name="Koga Y."/>
            <person name="Fujita H."/>
            <person name="Shirouzu K."/>
            <person name="Kimura H."/>
            <person name="Koda Y."/>
        </authorList>
    </citation>
    <scope>NUCLEOTIDE SEQUENCE [MRNA]</scope>
    <scope>SUBCELLULAR LOCATION</scope>
    <scope>TISSUE SPECIFICITY</scope>
    <scope>INDUCTION</scope>
</reference>
<reference key="2">
    <citation type="journal article" date="2004" name="Nat. Genet.">
        <title>Complete sequencing and characterization of 21,243 full-length human cDNAs.</title>
        <authorList>
            <person name="Ota T."/>
            <person name="Suzuki Y."/>
            <person name="Nishikawa T."/>
            <person name="Otsuki T."/>
            <person name="Sugiyama T."/>
            <person name="Irie R."/>
            <person name="Wakamatsu A."/>
            <person name="Hayashi K."/>
            <person name="Sato H."/>
            <person name="Nagai K."/>
            <person name="Kimura K."/>
            <person name="Makita H."/>
            <person name="Sekine M."/>
            <person name="Obayashi M."/>
            <person name="Nishi T."/>
            <person name="Shibahara T."/>
            <person name="Tanaka T."/>
            <person name="Ishii S."/>
            <person name="Yamamoto J."/>
            <person name="Saito K."/>
            <person name="Kawai Y."/>
            <person name="Isono Y."/>
            <person name="Nakamura Y."/>
            <person name="Nagahari K."/>
            <person name="Murakami K."/>
            <person name="Yasuda T."/>
            <person name="Iwayanagi T."/>
            <person name="Wagatsuma M."/>
            <person name="Shiratori A."/>
            <person name="Sudo H."/>
            <person name="Hosoiri T."/>
            <person name="Kaku Y."/>
            <person name="Kodaira H."/>
            <person name="Kondo H."/>
            <person name="Sugawara M."/>
            <person name="Takahashi M."/>
            <person name="Kanda K."/>
            <person name="Yokoi T."/>
            <person name="Furuya T."/>
            <person name="Kikkawa E."/>
            <person name="Omura Y."/>
            <person name="Abe K."/>
            <person name="Kamihara K."/>
            <person name="Katsuta N."/>
            <person name="Sato K."/>
            <person name="Tanikawa M."/>
            <person name="Yamazaki M."/>
            <person name="Ninomiya K."/>
            <person name="Ishibashi T."/>
            <person name="Yamashita H."/>
            <person name="Murakawa K."/>
            <person name="Fujimori K."/>
            <person name="Tanai H."/>
            <person name="Kimata M."/>
            <person name="Watanabe M."/>
            <person name="Hiraoka S."/>
            <person name="Chiba Y."/>
            <person name="Ishida S."/>
            <person name="Ono Y."/>
            <person name="Takiguchi S."/>
            <person name="Watanabe S."/>
            <person name="Yosida M."/>
            <person name="Hotuta T."/>
            <person name="Kusano J."/>
            <person name="Kanehori K."/>
            <person name="Takahashi-Fujii A."/>
            <person name="Hara H."/>
            <person name="Tanase T.-O."/>
            <person name="Nomura Y."/>
            <person name="Togiya S."/>
            <person name="Komai F."/>
            <person name="Hara R."/>
            <person name="Takeuchi K."/>
            <person name="Arita M."/>
            <person name="Imose N."/>
            <person name="Musashino K."/>
            <person name="Yuuki H."/>
            <person name="Oshima A."/>
            <person name="Sasaki N."/>
            <person name="Aotsuka S."/>
            <person name="Yoshikawa Y."/>
            <person name="Matsunawa H."/>
            <person name="Ichihara T."/>
            <person name="Shiohata N."/>
            <person name="Sano S."/>
            <person name="Moriya S."/>
            <person name="Momiyama H."/>
            <person name="Satoh N."/>
            <person name="Takami S."/>
            <person name="Terashima Y."/>
            <person name="Suzuki O."/>
            <person name="Nakagawa S."/>
            <person name="Senoh A."/>
            <person name="Mizoguchi H."/>
            <person name="Goto Y."/>
            <person name="Shimizu F."/>
            <person name="Wakebe H."/>
            <person name="Hishigaki H."/>
            <person name="Watanabe T."/>
            <person name="Sugiyama A."/>
            <person name="Takemoto M."/>
            <person name="Kawakami B."/>
            <person name="Yamazaki M."/>
            <person name="Watanabe K."/>
            <person name="Kumagai A."/>
            <person name="Itakura S."/>
            <person name="Fukuzumi Y."/>
            <person name="Fujimori Y."/>
            <person name="Komiyama M."/>
            <person name="Tashiro H."/>
            <person name="Tanigami A."/>
            <person name="Fujiwara T."/>
            <person name="Ono T."/>
            <person name="Yamada K."/>
            <person name="Fujii Y."/>
            <person name="Ozaki K."/>
            <person name="Hirao M."/>
            <person name="Ohmori Y."/>
            <person name="Kawabata A."/>
            <person name="Hikiji T."/>
            <person name="Kobatake N."/>
            <person name="Inagaki H."/>
            <person name="Ikema Y."/>
            <person name="Okamoto S."/>
            <person name="Okitani R."/>
            <person name="Kawakami T."/>
            <person name="Noguchi S."/>
            <person name="Itoh T."/>
            <person name="Shigeta K."/>
            <person name="Senba T."/>
            <person name="Matsumura K."/>
            <person name="Nakajima Y."/>
            <person name="Mizuno T."/>
            <person name="Morinaga M."/>
            <person name="Sasaki M."/>
            <person name="Togashi T."/>
            <person name="Oyama M."/>
            <person name="Hata H."/>
            <person name="Watanabe M."/>
            <person name="Komatsu T."/>
            <person name="Mizushima-Sugano J."/>
            <person name="Satoh T."/>
            <person name="Shirai Y."/>
            <person name="Takahashi Y."/>
            <person name="Nakagawa K."/>
            <person name="Okumura K."/>
            <person name="Nagase T."/>
            <person name="Nomura N."/>
            <person name="Kikuchi H."/>
            <person name="Masuho Y."/>
            <person name="Yamashita R."/>
            <person name="Nakai K."/>
            <person name="Yada T."/>
            <person name="Nakamura Y."/>
            <person name="Ohara O."/>
            <person name="Isogai T."/>
            <person name="Sugano S."/>
        </authorList>
    </citation>
    <scope>NUCLEOTIDE SEQUENCE [LARGE SCALE MRNA]</scope>
    <source>
        <tissue>Tongue</tissue>
    </source>
</reference>
<reference key="3">
    <citation type="submission" date="2005-07" db="EMBL/GenBank/DDBJ databases">
        <authorList>
            <person name="Mural R.J."/>
            <person name="Istrail S."/>
            <person name="Sutton G.G."/>
            <person name="Florea L."/>
            <person name="Halpern A.L."/>
            <person name="Mobarry C.M."/>
            <person name="Lippert R."/>
            <person name="Walenz B."/>
            <person name="Shatkay H."/>
            <person name="Dew I."/>
            <person name="Miller J.R."/>
            <person name="Flanigan M.J."/>
            <person name="Edwards N.J."/>
            <person name="Bolanos R."/>
            <person name="Fasulo D."/>
            <person name="Halldorsson B.V."/>
            <person name="Hannenhalli S."/>
            <person name="Turner R."/>
            <person name="Yooseph S."/>
            <person name="Lu F."/>
            <person name="Nusskern D.R."/>
            <person name="Shue B.C."/>
            <person name="Zheng X.H."/>
            <person name="Zhong F."/>
            <person name="Delcher A.L."/>
            <person name="Huson D.H."/>
            <person name="Kravitz S.A."/>
            <person name="Mouchard L."/>
            <person name="Reinert K."/>
            <person name="Remington K.A."/>
            <person name="Clark A.G."/>
            <person name="Waterman M.S."/>
            <person name="Eichler E.E."/>
            <person name="Adams M.D."/>
            <person name="Hunkapiller M.W."/>
            <person name="Myers E.W."/>
            <person name="Venter J.C."/>
        </authorList>
    </citation>
    <scope>NUCLEOTIDE SEQUENCE [LARGE SCALE GENOMIC DNA]</scope>
</reference>
<reference key="4">
    <citation type="journal article" date="2004" name="Genome Res.">
        <title>The status, quality, and expansion of the NIH full-length cDNA project: the Mammalian Gene Collection (MGC).</title>
        <authorList>
            <consortium name="The MGC Project Team"/>
        </authorList>
    </citation>
    <scope>NUCLEOTIDE SEQUENCE [LARGE SCALE MRNA]</scope>
    <source>
        <tissue>Eye</tissue>
        <tissue>Hypothalamus</tissue>
    </source>
</reference>
<reference key="5">
    <citation type="journal article" date="2005" name="J. Clin. Invest.">
        <title>A molecular chaperone for mitochondrial complex I assembly is mutated in a progressive encephalopathy.</title>
        <authorList>
            <person name="Ogilvie I."/>
            <person name="Kennaway N.G."/>
            <person name="Shoubridge E.A."/>
        </authorList>
    </citation>
    <scope>FUNCTION AS A CHAPERONE</scope>
    <scope>TISSUE SPECIFICITY</scope>
    <scope>INVOLVEMENT IN MC1DN10</scope>
    <scope>VARIANT MC1DN10 47-ARG--GLN-169 DEL</scope>
</reference>
<reference key="6">
    <citation type="journal article" date="2008" name="Mol. Genet. Metab.">
        <title>The unique neuroradiology of complex I deficiency due to NDUFA12L defect.</title>
        <authorList>
            <person name="Barghuti F."/>
            <person name="Elian K."/>
            <person name="Gomori J.M."/>
            <person name="Shaag A."/>
            <person name="Edvardson S."/>
            <person name="Saada A."/>
            <person name="Elpeleg O."/>
        </authorList>
    </citation>
    <scope>INVOLVEMENT IN MC1DN10</scope>
</reference>
<reference key="7">
    <citation type="journal article" date="2009" name="Hum. Mutat.">
        <title>Baculovirus complementation restores a novel NDUFAF2 mutation causing complex I deficiency.</title>
        <authorList>
            <person name="Hoefs S.J."/>
            <person name="Dieteren C.E."/>
            <person name="Rodenburg R.J."/>
            <person name="Naess K."/>
            <person name="Bruhn H."/>
            <person name="Wibom R."/>
            <person name="Wagena E."/>
            <person name="Willems P.H."/>
            <person name="Smeitink J.A."/>
            <person name="Nijtmans L.G."/>
            <person name="van den Heuvel L.P."/>
        </authorList>
    </citation>
    <scope>FUNCTION</scope>
    <scope>INVOLVEMENT IN MC1DN10</scope>
    <scope>VARIANT MC1DN10 38-TYR--GLN-169 DEL</scope>
    <scope>CHARACTERIZATION OF VARIANT MC1DN10 38-TYR--GLN-169 DEL</scope>
</reference>
<reference key="8">
    <citation type="journal article" date="2010" name="Neuropediatrics">
        <title>Leigh disease with brainstem involvement in complex I deficiency due to assembly factor NDUFAF2 defect.</title>
        <authorList>
            <person name="Herzer M."/>
            <person name="Koch J."/>
            <person name="Prokisch H."/>
            <person name="Rodenburg R."/>
            <person name="Rauscher C."/>
            <person name="Radauer W."/>
            <person name="Forstner R."/>
            <person name="Pilz P."/>
            <person name="Rolinski B."/>
            <person name="Freisinger P."/>
            <person name="Mayr J.A."/>
            <person name="Sperl W."/>
        </authorList>
    </citation>
    <scope>INVOLVEMENT IN MC1DN10</scope>
    <scope>VARIANT MC1DN10 3-TRP--GLN-169 DEL</scope>
</reference>
<reference key="9">
    <citation type="journal article" date="2011" name="BMC Syst. Biol.">
        <title>Initial characterization of the human central proteome.</title>
        <authorList>
            <person name="Burkard T.R."/>
            <person name="Planyavsky M."/>
            <person name="Kaupe I."/>
            <person name="Breitwieser F.P."/>
            <person name="Buerckstuemmer T."/>
            <person name="Bennett K.L."/>
            <person name="Superti-Furga G."/>
            <person name="Colinge J."/>
        </authorList>
    </citation>
    <scope>IDENTIFICATION BY MASS SPECTROMETRY [LARGE SCALE ANALYSIS]</scope>
</reference>
<reference key="10">
    <citation type="journal article" date="2013" name="J. Proteome Res.">
        <title>Toward a comprehensive characterization of a human cancer cell phosphoproteome.</title>
        <authorList>
            <person name="Zhou H."/>
            <person name="Di Palma S."/>
            <person name="Preisinger C."/>
            <person name="Peng M."/>
            <person name="Polat A.N."/>
            <person name="Heck A.J."/>
            <person name="Mohammed S."/>
        </authorList>
    </citation>
    <scope>PHOSPHORYLATION [LARGE SCALE ANALYSIS] AT SER-134</scope>
    <scope>IDENTIFICATION BY MASS SPECTROMETRY [LARGE SCALE ANALYSIS]</scope>
    <source>
        <tissue>Erythroleukemia</tissue>
    </source>
</reference>
<reference key="11">
    <citation type="journal article" date="2015" name="Proteomics">
        <title>N-terminome analysis of the human mitochondrial proteome.</title>
        <authorList>
            <person name="Vaca Jacome A.S."/>
            <person name="Rabilloud T."/>
            <person name="Schaeffer-Reiss C."/>
            <person name="Rompais M."/>
            <person name="Ayoub D."/>
            <person name="Lane L."/>
            <person name="Bairoch A."/>
            <person name="Van Dorsselaer A."/>
            <person name="Carapito C."/>
        </authorList>
    </citation>
    <scope>IDENTIFICATION BY MASS SPECTROMETRY [LARGE SCALE ANALYSIS]</scope>
</reference>
<reference key="12">
    <citation type="journal article" date="2016" name="Nature">
        <title>Accessory subunits are integral for assembly and function of human mitochondrial complex I.</title>
        <authorList>
            <person name="Stroud D.A."/>
            <person name="Surgenor E.E."/>
            <person name="Formosa L.E."/>
            <person name="Reljic B."/>
            <person name="Frazier A.E."/>
            <person name="Dibley M.G."/>
            <person name="Osellame L.D."/>
            <person name="Stait T."/>
            <person name="Beilharz T.H."/>
            <person name="Thorburn D.R."/>
            <person name="Salim A."/>
            <person name="Ryan M.T."/>
        </authorList>
    </citation>
    <scope>FUNCTION</scope>
</reference>
<reference key="13">
    <citation type="journal article" date="2024" name="J. Clin. Invest.">
        <title>Primary cilia formation requires the Leigh syndrome-associated mitochondrial protein NDUFAF2.</title>
        <authorList>
            <person name="Lo C.H."/>
            <person name="Liu Z."/>
            <person name="Chen S."/>
            <person name="Lin F."/>
            <person name="Berneshawi A.R."/>
            <person name="Yu C.Q."/>
            <person name="Koo E.B."/>
            <person name="Kowal T.J."/>
            <person name="Ning K."/>
            <person name="Hu Y."/>
            <person name="Wang W.J."/>
            <person name="Liao Y.J."/>
            <person name="Sun Y."/>
        </authorList>
    </citation>
    <scope>FUNCTION</scope>
    <scope>INTERACTION WITH ARMC9</scope>
</reference>
<accession>Q8N183</accession>
<accession>A8K5I1</accession>
<gene>
    <name type="primary">NDUFAF2</name>
    <name type="synonym">NDUFA12L</name>
</gene>
<comment type="function">
    <text evidence="4 6 8 9">Acts as a molecular chaperone for mitochondrial complex I assembly (PubMed:16200211, PubMed:19384974). Complex I functions in the transfer of electrons from NADH to the respiratory chain. The immediate electron acceptor for the enzyme is believed to be ubiquinone (PubMed:16200211, PubMed:27626371). Is involved in the initial steps of cilia formation, including removal of CP110 from the mother centrioles, docking of membrane vesicles to the mother centrioles, and establishment of the transition zone (PubMed:38949024).</text>
</comment>
<comment type="subunit">
    <text evidence="9">Interacts with ARMC9.</text>
</comment>
<comment type="interaction">
    <interactant intactId="EBI-2682365">
        <id>Q8N183</id>
    </interactant>
    <interactant intactId="EBI-10750859">
        <id>Q7Z3E5</id>
        <label>ARMC9</label>
    </interactant>
    <organismsDiffer>false</organismsDiffer>
    <experiments>3</experiments>
</comment>
<comment type="interaction">
    <interactant intactId="EBI-2682365">
        <id>Q8N183</id>
    </interactant>
    <interactant intactId="EBI-1058710">
        <id>O43169</id>
        <label>CYB5B</label>
    </interactant>
    <organismsDiffer>false</organismsDiffer>
    <experiments>3</experiments>
</comment>
<comment type="interaction">
    <interactant intactId="EBI-2682365">
        <id>Q8N183</id>
    </interactant>
    <interactant intactId="EBI-8070286">
        <id>O43561-2</id>
        <label>LAT</label>
    </interactant>
    <organismsDiffer>false</organismsDiffer>
    <experiments>3</experiments>
</comment>
<comment type="interaction">
    <interactant intactId="EBI-2682365">
        <id>Q8N183</id>
    </interactant>
    <interactant intactId="EBI-12033434">
        <id>Q9UBY5</id>
        <label>LPAR3</label>
    </interactant>
    <organismsDiffer>false</organismsDiffer>
    <experiments>3</experiments>
</comment>
<comment type="interaction">
    <interactant intactId="EBI-2682365">
        <id>Q8N183</id>
    </interactant>
    <interactant intactId="EBI-721471">
        <id>O95182</id>
        <label>NDUFA7</label>
    </interactant>
    <organismsDiffer>false</organismsDiffer>
    <experiments>3</experiments>
</comment>
<comment type="interaction">
    <interactant intactId="EBI-2682365">
        <id>Q8N183</id>
    </interactant>
    <interactant intactId="EBI-1058865">
        <id>O75396</id>
        <label>SEC22B</label>
    </interactant>
    <organismsDiffer>false</organismsDiffer>
    <experiments>3</experiments>
</comment>
<comment type="interaction">
    <interactant intactId="EBI-2682365">
        <id>Q8N183</id>
    </interactant>
    <interactant intactId="EBI-12188413">
        <id>B2RUZ4</id>
        <label>SMIM1</label>
    </interactant>
    <organismsDiffer>false</organismsDiffer>
    <experiments>3</experiments>
</comment>
<comment type="interaction">
    <interactant intactId="EBI-2682365">
        <id>Q8N183</id>
    </interactant>
    <interactant intactId="EBI-742688">
        <id>Q9NZD8</id>
        <label>SPG21</label>
    </interactant>
    <organismsDiffer>false</organismsDiffer>
    <experiments>3</experiments>
</comment>
<comment type="interaction">
    <interactant intactId="EBI-2682365">
        <id>Q8N183</id>
    </interactant>
    <interactant intactId="EBI-727240">
        <id>Q9UNK0</id>
        <label>STX8</label>
    </interactant>
    <organismsDiffer>false</organismsDiffer>
    <experiments>3</experiments>
</comment>
<comment type="interaction">
    <interactant intactId="EBI-2682365">
        <id>Q8N183</id>
    </interactant>
    <interactant intactId="EBI-11994282">
        <id>Q5SNT2-2</id>
        <label>TMEM201</label>
    </interactant>
    <organismsDiffer>false</organismsDiffer>
    <experiments>3</experiments>
</comment>
<comment type="interaction">
    <interactant intactId="EBI-2682365">
        <id>Q8N183</id>
    </interactant>
    <interactant intactId="EBI-12111910">
        <id>Q5BJF2</id>
        <label>TMEM97</label>
    </interactant>
    <organismsDiffer>false</organismsDiffer>
    <experiments>3</experiments>
</comment>
<comment type="subcellular location">
    <subcellularLocation>
        <location evidence="3">Mitochondrion</location>
    </subcellularLocation>
</comment>
<comment type="tissue specificity">
    <text evidence="3 4">Highly expressed in ESCC cells. Also expressed in heart, skeletal muscle, liver, and in fibroblasts.</text>
</comment>
<comment type="induction">
    <text evidence="3">By MYC. Direct transcriptional target of MYC.</text>
</comment>
<comment type="disease" evidence="4 5 6 7">
    <disease id="DI-05408">
        <name>Mitochondrial complex I deficiency, nuclear type 10</name>
        <acronym>MC1DN10</acronym>
        <description>A form of mitochondrial complex I deficiency, the most common biochemical signature of mitochondrial disorders, a group of highly heterogeneous conditions characterized by defective oxidative phosphorylation, which collectively affects 1 in 5-10000 live births. Clinical disorders have variable severity, ranging from lethal neonatal disease to adult-onset neurodegenerative disorders. Phenotypes include macrocephaly with progressive leukodystrophy, non-specific encephalopathy, cardiomyopathy, myopathy, liver disease, Leigh syndrome, Leber hereditary optic neuropathy, and some forms of Parkinson disease. MC1DN10 transmission pattern is consistent with autosomal recessive inheritance.</description>
        <dbReference type="MIM" id="618233"/>
    </disease>
    <text>The disease is caused by variants affecting the gene represented in this entry.</text>
</comment>
<comment type="similarity">
    <text evidence="11">Belongs to the complex I NDUFA12 subunit family.</text>
</comment>
<evidence type="ECO:0000255" key="1"/>
<evidence type="ECO:0000256" key="2">
    <source>
        <dbReference type="SAM" id="MobiDB-lite"/>
    </source>
</evidence>
<evidence type="ECO:0000269" key="3">
    <source>
    </source>
</evidence>
<evidence type="ECO:0000269" key="4">
    <source>
    </source>
</evidence>
<evidence type="ECO:0000269" key="5">
    <source>
    </source>
</evidence>
<evidence type="ECO:0000269" key="6">
    <source>
    </source>
</evidence>
<evidence type="ECO:0000269" key="7">
    <source>
    </source>
</evidence>
<evidence type="ECO:0000269" key="8">
    <source>
    </source>
</evidence>
<evidence type="ECO:0000269" key="9">
    <source>
    </source>
</evidence>
<evidence type="ECO:0000303" key="10">
    <source>
    </source>
</evidence>
<evidence type="ECO:0000305" key="11"/>
<evidence type="ECO:0007744" key="12">
    <source>
    </source>
</evidence>
<organism>
    <name type="scientific">Homo sapiens</name>
    <name type="common">Human</name>
    <dbReference type="NCBI Taxonomy" id="9606"/>
    <lineage>
        <taxon>Eukaryota</taxon>
        <taxon>Metazoa</taxon>
        <taxon>Chordata</taxon>
        <taxon>Craniata</taxon>
        <taxon>Vertebrata</taxon>
        <taxon>Euteleostomi</taxon>
        <taxon>Mammalia</taxon>
        <taxon>Eutheria</taxon>
        <taxon>Euarchontoglires</taxon>
        <taxon>Primates</taxon>
        <taxon>Haplorrhini</taxon>
        <taxon>Catarrhini</taxon>
        <taxon>Hominidae</taxon>
        <taxon>Homo</taxon>
    </lineage>
</organism>
<name>NDUF2_HUMAN</name>
<protein>
    <recommendedName>
        <fullName>NADH dehydrogenase [ubiquinone] 1 alpha subcomplex assembly factor 2</fullName>
    </recommendedName>
    <alternativeName>
        <fullName>B17.2-like</fullName>
        <shortName>B17.2L</shortName>
    </alternativeName>
    <alternativeName>
        <fullName evidence="10">Mimitin</fullName>
    </alternativeName>
    <alternativeName>
        <fullName evidence="10">Myc-induced mitochondrial protein</fullName>
        <shortName evidence="10">MMTN</shortName>
    </alternativeName>
    <alternativeName>
        <fullName>NDUFA12-like protein</fullName>
    </alternativeName>
</protein>
<sequence>MGWSQDLFRALWRSLSREVKEHVGTDQFGNKYYYIPQYKNWRGQTIREKRIVEAANKKEVDYEAGDIPTEWEAWIRRTRKTPPTMEEILKNEKHREEIKIKSQDFYEKEKLLSKETSEELLPPPVQTQIKGHASAPYFGKEEPSVAPSSTGKTFQPGSWMPRDGKSHNQ</sequence>
<keyword id="KW-0143">Chaperone</keyword>
<keyword id="KW-0970">Cilium biogenesis/degradation</keyword>
<keyword id="KW-0225">Disease variant</keyword>
<keyword id="KW-0496">Mitochondrion</keyword>
<keyword id="KW-0597">Phosphoprotein</keyword>
<keyword id="KW-1274">Primary mitochondrial disease</keyword>
<keyword id="KW-1267">Proteomics identification</keyword>
<keyword id="KW-1185">Reference proteome</keyword>
<keyword id="KW-0809">Transit peptide</keyword>
<feature type="transit peptide" description="Mitochondrion" evidence="1">
    <location>
        <begin position="1"/>
        <end status="unknown"/>
    </location>
</feature>
<feature type="chain" id="PRO_0000020054" description="NADH dehydrogenase [ubiquinone] 1 alpha subcomplex assembly factor 2">
    <location>
        <begin status="unknown"/>
        <end position="169"/>
    </location>
</feature>
<feature type="region of interest" description="Disordered" evidence="2">
    <location>
        <begin position="116"/>
        <end position="169"/>
    </location>
</feature>
<feature type="compositionally biased region" description="Polar residues" evidence="2">
    <location>
        <begin position="146"/>
        <end position="156"/>
    </location>
</feature>
<feature type="modified residue" description="Phosphoserine" evidence="12">
    <location>
        <position position="134"/>
    </location>
</feature>
<feature type="sequence variant" id="VAR_081422" description="In MC1DN10." evidence="7">
    <location>
        <begin position="3"/>
        <end position="169"/>
    </location>
</feature>
<feature type="sequence variant" id="VAR_081423" description="In MC1DN10; patient cells homozygous for the variant do not express detectable amounts of protein; complex I assembly is altered and activity is severely reduced in patient cells compared to control." evidence="6">
    <location>
        <begin position="38"/>
        <end position="169"/>
    </location>
</feature>
<feature type="sequence variant" id="VAR_081424" description="In MC1DN10." evidence="4">
    <location>
        <begin position="47"/>
        <end position="169"/>
    </location>
</feature>
<proteinExistence type="evidence at protein level"/>